<accession>A7NAY2</accession>
<name>NADK_FRATF</name>
<reference key="1">
    <citation type="journal article" date="2009" name="PLoS ONE">
        <title>Complete genome sequence of Francisella tularensis subspecies holarctica FTNF002-00.</title>
        <authorList>
            <person name="Barabote R.D."/>
            <person name="Xie G."/>
            <person name="Brettin T.S."/>
            <person name="Hinrichs S.H."/>
            <person name="Fey P.D."/>
            <person name="Jay J.J."/>
            <person name="Engle J.L."/>
            <person name="Godbole S.D."/>
            <person name="Noronha J.M."/>
            <person name="Scheuermann R.H."/>
            <person name="Zhou L.W."/>
            <person name="Lion C."/>
            <person name="Dempsey M.P."/>
        </authorList>
    </citation>
    <scope>NUCLEOTIDE SEQUENCE [LARGE SCALE GENOMIC DNA]</scope>
    <source>
        <strain>FTNF002-00 / FTA</strain>
    </source>
</reference>
<dbReference type="EC" id="2.7.1.23" evidence="1"/>
<dbReference type="EMBL" id="CP000803">
    <property type="protein sequence ID" value="ABU61135.1"/>
    <property type="molecule type" value="Genomic_DNA"/>
</dbReference>
<dbReference type="RefSeq" id="WP_003015031.1">
    <property type="nucleotide sequence ID" value="NC_009749.1"/>
</dbReference>
<dbReference type="SMR" id="A7NAY2"/>
<dbReference type="KEGG" id="fta:FTA_0659"/>
<dbReference type="HOGENOM" id="CLU_008831_0_1_6"/>
<dbReference type="GO" id="GO:0005737">
    <property type="term" value="C:cytoplasm"/>
    <property type="evidence" value="ECO:0007669"/>
    <property type="project" value="UniProtKB-SubCell"/>
</dbReference>
<dbReference type="GO" id="GO:0005524">
    <property type="term" value="F:ATP binding"/>
    <property type="evidence" value="ECO:0007669"/>
    <property type="project" value="UniProtKB-KW"/>
</dbReference>
<dbReference type="GO" id="GO:0046872">
    <property type="term" value="F:metal ion binding"/>
    <property type="evidence" value="ECO:0007669"/>
    <property type="project" value="UniProtKB-UniRule"/>
</dbReference>
<dbReference type="GO" id="GO:0051287">
    <property type="term" value="F:NAD binding"/>
    <property type="evidence" value="ECO:0007669"/>
    <property type="project" value="UniProtKB-ARBA"/>
</dbReference>
<dbReference type="GO" id="GO:0003951">
    <property type="term" value="F:NAD+ kinase activity"/>
    <property type="evidence" value="ECO:0007669"/>
    <property type="project" value="UniProtKB-UniRule"/>
</dbReference>
<dbReference type="GO" id="GO:0019674">
    <property type="term" value="P:NAD metabolic process"/>
    <property type="evidence" value="ECO:0007669"/>
    <property type="project" value="InterPro"/>
</dbReference>
<dbReference type="GO" id="GO:0006741">
    <property type="term" value="P:NADP biosynthetic process"/>
    <property type="evidence" value="ECO:0007669"/>
    <property type="project" value="UniProtKB-UniRule"/>
</dbReference>
<dbReference type="Gene3D" id="3.40.50.10330">
    <property type="entry name" value="Probable inorganic polyphosphate/atp-NAD kinase, domain 1"/>
    <property type="match status" value="1"/>
</dbReference>
<dbReference type="Gene3D" id="2.60.200.30">
    <property type="entry name" value="Probable inorganic polyphosphate/atp-NAD kinase, domain 2"/>
    <property type="match status" value="1"/>
</dbReference>
<dbReference type="HAMAP" id="MF_00361">
    <property type="entry name" value="NAD_kinase"/>
    <property type="match status" value="1"/>
</dbReference>
<dbReference type="InterPro" id="IPR017438">
    <property type="entry name" value="ATP-NAD_kinase_N"/>
</dbReference>
<dbReference type="InterPro" id="IPR017437">
    <property type="entry name" value="ATP-NAD_kinase_PpnK-typ_C"/>
</dbReference>
<dbReference type="InterPro" id="IPR016064">
    <property type="entry name" value="NAD/diacylglycerol_kinase_sf"/>
</dbReference>
<dbReference type="InterPro" id="IPR002504">
    <property type="entry name" value="NADK"/>
</dbReference>
<dbReference type="PANTHER" id="PTHR20275">
    <property type="entry name" value="NAD KINASE"/>
    <property type="match status" value="1"/>
</dbReference>
<dbReference type="PANTHER" id="PTHR20275:SF0">
    <property type="entry name" value="NAD KINASE"/>
    <property type="match status" value="1"/>
</dbReference>
<dbReference type="Pfam" id="PF01513">
    <property type="entry name" value="NAD_kinase"/>
    <property type="match status" value="1"/>
</dbReference>
<dbReference type="Pfam" id="PF20143">
    <property type="entry name" value="NAD_kinase_C"/>
    <property type="match status" value="1"/>
</dbReference>
<dbReference type="SUPFAM" id="SSF111331">
    <property type="entry name" value="NAD kinase/diacylglycerol kinase-like"/>
    <property type="match status" value="1"/>
</dbReference>
<comment type="function">
    <text evidence="1">Involved in the regulation of the intracellular balance of NAD and NADP, and is a key enzyme in the biosynthesis of NADP. Catalyzes specifically the phosphorylation on 2'-hydroxyl of the adenosine moiety of NAD to yield NADP.</text>
</comment>
<comment type="catalytic activity">
    <reaction evidence="1">
        <text>NAD(+) + ATP = ADP + NADP(+) + H(+)</text>
        <dbReference type="Rhea" id="RHEA:18629"/>
        <dbReference type="ChEBI" id="CHEBI:15378"/>
        <dbReference type="ChEBI" id="CHEBI:30616"/>
        <dbReference type="ChEBI" id="CHEBI:57540"/>
        <dbReference type="ChEBI" id="CHEBI:58349"/>
        <dbReference type="ChEBI" id="CHEBI:456216"/>
        <dbReference type="EC" id="2.7.1.23"/>
    </reaction>
</comment>
<comment type="cofactor">
    <cofactor evidence="1">
        <name>a divalent metal cation</name>
        <dbReference type="ChEBI" id="CHEBI:60240"/>
    </cofactor>
</comment>
<comment type="subcellular location">
    <subcellularLocation>
        <location evidence="1">Cytoplasm</location>
    </subcellularLocation>
</comment>
<comment type="similarity">
    <text evidence="1">Belongs to the NAD kinase family.</text>
</comment>
<keyword id="KW-0067">ATP-binding</keyword>
<keyword id="KW-0963">Cytoplasm</keyword>
<keyword id="KW-0418">Kinase</keyword>
<keyword id="KW-0520">NAD</keyword>
<keyword id="KW-0521">NADP</keyword>
<keyword id="KW-0547">Nucleotide-binding</keyword>
<keyword id="KW-0808">Transferase</keyword>
<protein>
    <recommendedName>
        <fullName evidence="1">NAD kinase</fullName>
        <ecNumber evidence="1">2.7.1.23</ecNumber>
    </recommendedName>
    <alternativeName>
        <fullName evidence="1">ATP-dependent NAD kinase</fullName>
    </alternativeName>
</protein>
<sequence>MAFKYHKVAIVGKHYKKEVSQMVETLYAYLQQQGLEIIVENDTAADTSLVNVAIASLKEIALRCDVAIVVGGDGNFLKASRLLALYSNIPVIGINKGKLGFLTTLAADDNALKNDLYAILKGDSSVTKMSMLKCRVDNNLRAPLEASIALNEIAITASRGLMFGLKVFIDGRYAFDQRGDGLIVSTPTGSTAHAMSAGGPILNPNQNSVVLVPICSHSLNSRPLVISDESVIDIYITDYNDPEPVLSIDGRHDTILKAHQKVTIQKARKKVTVLHTKDYNYYDTLREKLGWSKVLF</sequence>
<proteinExistence type="inferred from homology"/>
<gene>
    <name evidence="1" type="primary">nadK</name>
    <name type="ordered locus">FTA_0659</name>
</gene>
<evidence type="ECO:0000255" key="1">
    <source>
        <dbReference type="HAMAP-Rule" id="MF_00361"/>
    </source>
</evidence>
<organism>
    <name type="scientific">Francisella tularensis subsp. holarctica (strain FTNF002-00 / FTA)</name>
    <dbReference type="NCBI Taxonomy" id="458234"/>
    <lineage>
        <taxon>Bacteria</taxon>
        <taxon>Pseudomonadati</taxon>
        <taxon>Pseudomonadota</taxon>
        <taxon>Gammaproteobacteria</taxon>
        <taxon>Thiotrichales</taxon>
        <taxon>Francisellaceae</taxon>
        <taxon>Francisella</taxon>
    </lineage>
</organism>
<feature type="chain" id="PRO_1000005407" description="NAD kinase">
    <location>
        <begin position="1"/>
        <end position="296"/>
    </location>
</feature>
<feature type="active site" description="Proton acceptor" evidence="1">
    <location>
        <position position="73"/>
    </location>
</feature>
<feature type="binding site" evidence="1">
    <location>
        <begin position="73"/>
        <end position="74"/>
    </location>
    <ligand>
        <name>NAD(+)</name>
        <dbReference type="ChEBI" id="CHEBI:57540"/>
    </ligand>
</feature>
<feature type="binding site" evidence="1">
    <location>
        <position position="78"/>
    </location>
    <ligand>
        <name>NAD(+)</name>
        <dbReference type="ChEBI" id="CHEBI:57540"/>
    </ligand>
</feature>
<feature type="binding site" evidence="1">
    <location>
        <begin position="151"/>
        <end position="152"/>
    </location>
    <ligand>
        <name>NAD(+)</name>
        <dbReference type="ChEBI" id="CHEBI:57540"/>
    </ligand>
</feature>
<feature type="binding site" evidence="1">
    <location>
        <position position="178"/>
    </location>
    <ligand>
        <name>NAD(+)</name>
        <dbReference type="ChEBI" id="CHEBI:57540"/>
    </ligand>
</feature>
<feature type="binding site" evidence="1">
    <location>
        <position position="180"/>
    </location>
    <ligand>
        <name>NAD(+)</name>
        <dbReference type="ChEBI" id="CHEBI:57540"/>
    </ligand>
</feature>
<feature type="binding site" evidence="1">
    <location>
        <begin position="191"/>
        <end position="196"/>
    </location>
    <ligand>
        <name>NAD(+)</name>
        <dbReference type="ChEBI" id="CHEBI:57540"/>
    </ligand>
</feature>